<keyword id="KW-0027">Amidation</keyword>
<keyword id="KW-0903">Direct protein sequencing</keyword>
<keyword id="KW-0964">Secreted</keyword>
<keyword id="KW-0732">Signal</keyword>
<feature type="signal peptide" evidence="1">
    <location>
        <begin position="1"/>
        <end position="22"/>
    </location>
</feature>
<feature type="propeptide" id="PRO_0000444426" evidence="2">
    <location>
        <begin position="23"/>
        <end position="69"/>
    </location>
</feature>
<feature type="peptide" id="PRO_0000437254" description="Met-lysine-1b" evidence="2">
    <location>
        <begin position="70"/>
        <end position="120"/>
    </location>
</feature>
<feature type="modified residue" description="Methionine amide" evidence="2">
    <location>
        <position position="120"/>
    </location>
</feature>
<evidence type="ECO:0000255" key="1"/>
<evidence type="ECO:0000269" key="2">
    <source>
    </source>
</evidence>
<evidence type="ECO:0000303" key="3">
    <source>
    </source>
</evidence>
<evidence type="ECO:0000305" key="4">
    <source>
    </source>
</evidence>
<name>ML1B_LACTA</name>
<comment type="function">
    <text evidence="2">Shows no antimicrobial activity against Gram-positive bacterium B.subtilis B-501 or Gram-negative bacterium E.coli DH5-alpha at concentrations up to 20 ug/ml. Shows no toxicity towards insect (S.carnaria) larvae.</text>
</comment>
<comment type="subcellular location">
    <subcellularLocation>
        <location evidence="2">Secreted</location>
    </subcellularLocation>
</comment>
<comment type="tissue specificity">
    <text evidence="4">Expressed by the venom gland.</text>
</comment>
<comment type="mass spectrometry"/>
<comment type="similarity">
    <text>Belongs to the met-lysine family.</text>
</comment>
<reference key="1">
    <citation type="journal article" date="2016" name="Biochem. J.">
        <title>Lachesana tarabaevi, an expert in membrane-active toxins.</title>
        <authorList>
            <person name="Kuzmenkov A.I."/>
            <person name="Sachkova M.Y."/>
            <person name="Kovalchuk S.I."/>
            <person name="Grishin E.V."/>
            <person name="Vassilevski A.A."/>
        </authorList>
    </citation>
    <scope>NUCLEOTIDE SEQUENCE [MRNA]</scope>
    <scope>PROTEIN SEQUENCE OF 70-120</scope>
    <scope>FUNCTION</scope>
    <scope>SUBCELLULAR LOCATION</scope>
    <scope>MASS SPECTROMETRY</scope>
    <scope>AMIDATION AT MET-120</scope>
    <source>
        <tissue>Venom</tissue>
    </source>
</reference>
<sequence>MKSFVFALALIVAFACISESKSDHTGYEEEENLEDSELTDLVAAALLEELAEASEMDDLSYTEEAGGERMDKLEEMALKLKDKLKTMAEKGAQMGEKLKEMLPKAMEKLKELMEKMKNKMG</sequence>
<organism evidence="3">
    <name type="scientific">Lachesana tarabaevi</name>
    <name type="common">Spider</name>
    <dbReference type="NCBI Taxonomy" id="379576"/>
    <lineage>
        <taxon>Eukaryota</taxon>
        <taxon>Metazoa</taxon>
        <taxon>Ecdysozoa</taxon>
        <taxon>Arthropoda</taxon>
        <taxon>Chelicerata</taxon>
        <taxon>Arachnida</taxon>
        <taxon>Araneae</taxon>
        <taxon>Araneomorphae</taxon>
        <taxon>Entelegynae</taxon>
        <taxon>Entelegynae incertae sedis</taxon>
        <taxon>Zodariidae</taxon>
        <taxon>Lachesana</taxon>
    </lineage>
</organism>
<accession>C0HJV8</accession>
<accession>A0A1B3Z578</accession>
<dbReference type="EMBL" id="KT591335">
    <property type="protein sequence ID" value="AOH73457.1"/>
    <property type="molecule type" value="mRNA"/>
</dbReference>
<dbReference type="SMR" id="C0HJV8"/>
<dbReference type="GO" id="GO:0005576">
    <property type="term" value="C:extracellular region"/>
    <property type="evidence" value="ECO:0007669"/>
    <property type="project" value="UniProtKB-SubCell"/>
</dbReference>
<dbReference type="InterPro" id="IPR018802">
    <property type="entry name" value="Latarcin_precursor"/>
</dbReference>
<dbReference type="Pfam" id="PF10279">
    <property type="entry name" value="Latarcin"/>
    <property type="match status" value="1"/>
</dbReference>
<protein>
    <recommendedName>
        <fullName evidence="3">Met-lysine-1b</fullName>
        <shortName evidence="3">MLys-1b</shortName>
    </recommendedName>
</protein>
<proteinExistence type="evidence at protein level"/>